<comment type="function">
    <text evidence="1">Plays a role in neuronal plasticity and the proteolytic action may subserve structural reorganizations associated with learning and memory operations.</text>
</comment>
<comment type="subcellular location">
    <subcellularLocation>
        <location>Secreted</location>
    </subcellularLocation>
</comment>
<comment type="similarity">
    <text evidence="5">Belongs to the peptidase S1 family.</text>
</comment>
<organism>
    <name type="scientific">Pan troglodytes</name>
    <name type="common">Chimpanzee</name>
    <dbReference type="NCBI Taxonomy" id="9598"/>
    <lineage>
        <taxon>Eukaryota</taxon>
        <taxon>Metazoa</taxon>
        <taxon>Chordata</taxon>
        <taxon>Craniata</taxon>
        <taxon>Vertebrata</taxon>
        <taxon>Euteleostomi</taxon>
        <taxon>Mammalia</taxon>
        <taxon>Eutheria</taxon>
        <taxon>Euarchontoglires</taxon>
        <taxon>Primates</taxon>
        <taxon>Haplorrhini</taxon>
        <taxon>Catarrhini</taxon>
        <taxon>Hominidae</taxon>
        <taxon>Pan</taxon>
    </lineage>
</organism>
<name>NETR_PANTR</name>
<proteinExistence type="inferred from homology"/>
<accession>Q5G271</accession>
<evidence type="ECO:0000250" key="1"/>
<evidence type="ECO:0000255" key="2"/>
<evidence type="ECO:0000255" key="3">
    <source>
        <dbReference type="PROSITE-ProRule" id="PRU00121"/>
    </source>
</evidence>
<evidence type="ECO:0000255" key="4">
    <source>
        <dbReference type="PROSITE-ProRule" id="PRU00196"/>
    </source>
</evidence>
<evidence type="ECO:0000255" key="5">
    <source>
        <dbReference type="PROSITE-ProRule" id="PRU00274"/>
    </source>
</evidence>
<evidence type="ECO:0000256" key="6">
    <source>
        <dbReference type="SAM" id="MobiDB-lite"/>
    </source>
</evidence>
<keyword id="KW-1015">Disulfide bond</keyword>
<keyword id="KW-0325">Glycoprotein</keyword>
<keyword id="KW-0378">Hydrolase</keyword>
<keyword id="KW-0420">Kringle</keyword>
<keyword id="KW-0645">Protease</keyword>
<keyword id="KW-1185">Reference proteome</keyword>
<keyword id="KW-0677">Repeat</keyword>
<keyword id="KW-0964">Secreted</keyword>
<keyword id="KW-0720">Serine protease</keyword>
<keyword id="KW-0732">Signal</keyword>
<gene>
    <name type="primary">PRSS12</name>
</gene>
<feature type="signal peptide" evidence="2">
    <location>
        <begin position="1"/>
        <end position="20"/>
    </location>
</feature>
<feature type="chain" id="PRO_0000027666" description="Neurotrypsin">
    <location>
        <begin position="21"/>
        <end position="875"/>
    </location>
</feature>
<feature type="domain" description="Kringle" evidence="3">
    <location>
        <begin position="93"/>
        <end position="165"/>
    </location>
</feature>
<feature type="domain" description="SRCR 1" evidence="4">
    <location>
        <begin position="170"/>
        <end position="271"/>
    </location>
</feature>
<feature type="domain" description="SRCR 2" evidence="4">
    <location>
        <begin position="280"/>
        <end position="381"/>
    </location>
</feature>
<feature type="domain" description="SRCR 3" evidence="4">
    <location>
        <begin position="387"/>
        <end position="487"/>
    </location>
</feature>
<feature type="domain" description="SRCR 4" evidence="4">
    <location>
        <begin position="500"/>
        <end position="601"/>
    </location>
</feature>
<feature type="domain" description="Peptidase S1" evidence="5">
    <location>
        <begin position="631"/>
        <end position="874"/>
    </location>
</feature>
<feature type="region of interest" description="Disordered" evidence="6">
    <location>
        <begin position="29"/>
        <end position="88"/>
    </location>
</feature>
<feature type="region of interest" description="Zymogen activation region">
    <location>
        <begin position="619"/>
        <end position="630"/>
    </location>
</feature>
<feature type="compositionally biased region" description="Low complexity" evidence="6">
    <location>
        <begin position="43"/>
        <end position="53"/>
    </location>
</feature>
<feature type="compositionally biased region" description="Pro residues" evidence="6">
    <location>
        <begin position="56"/>
        <end position="71"/>
    </location>
</feature>
<feature type="active site" description="Charge relay system" evidence="1">
    <location>
        <position position="676"/>
    </location>
</feature>
<feature type="active site" description="Charge relay system" evidence="1">
    <location>
        <position position="726"/>
    </location>
</feature>
<feature type="active site" description="Charge relay system" evidence="1">
    <location>
        <position position="825"/>
    </location>
</feature>
<feature type="site" description="Reactive bond homolog" evidence="2">
    <location>
        <begin position="630"/>
        <end position="631"/>
    </location>
</feature>
<feature type="glycosylation site" description="N-linked (GlcNAc...) asparagine" evidence="2">
    <location>
        <position position="26"/>
    </location>
</feature>
<feature type="glycosylation site" description="N-linked (GlcNAc...) asparagine" evidence="2">
    <location>
        <position position="683"/>
    </location>
</feature>
<feature type="disulfide bond" evidence="1">
    <location>
        <begin position="93"/>
        <end position="165"/>
    </location>
</feature>
<feature type="disulfide bond" evidence="1">
    <location>
        <begin position="109"/>
        <end position="149"/>
    </location>
</feature>
<feature type="disulfide bond" evidence="1">
    <location>
        <begin position="138"/>
        <end position="163"/>
    </location>
</feature>
<feature type="disulfide bond" evidence="1">
    <location>
        <begin position="195"/>
        <end position="259"/>
    </location>
</feature>
<feature type="disulfide bond" evidence="1">
    <location>
        <begin position="208"/>
        <end position="269"/>
    </location>
</feature>
<feature type="disulfide bond" evidence="1">
    <location>
        <begin position="239"/>
        <end position="249"/>
    </location>
</feature>
<feature type="disulfide bond" evidence="1">
    <location>
        <begin position="305"/>
        <end position="369"/>
    </location>
</feature>
<feature type="disulfide bond" evidence="1">
    <location>
        <begin position="318"/>
        <end position="379"/>
    </location>
</feature>
<feature type="disulfide bond" evidence="1">
    <location>
        <begin position="349"/>
        <end position="359"/>
    </location>
</feature>
<feature type="disulfide bond" evidence="1">
    <location>
        <begin position="412"/>
        <end position="475"/>
    </location>
</feature>
<feature type="disulfide bond" evidence="1">
    <location>
        <begin position="425"/>
        <end position="485"/>
    </location>
</feature>
<feature type="disulfide bond" evidence="1">
    <location>
        <begin position="455"/>
        <end position="465"/>
    </location>
</feature>
<feature type="disulfide bond" evidence="1">
    <location>
        <begin position="525"/>
        <end position="589"/>
    </location>
</feature>
<feature type="disulfide bond" evidence="1">
    <location>
        <begin position="538"/>
        <end position="599"/>
    </location>
</feature>
<feature type="disulfide bond" evidence="1">
    <location>
        <begin position="569"/>
        <end position="579"/>
    </location>
</feature>
<feature type="disulfide bond" evidence="2">
    <location>
        <begin position="619"/>
        <end position="750"/>
    </location>
</feature>
<feature type="disulfide bond" evidence="1">
    <location>
        <begin position="661"/>
        <end position="677"/>
    </location>
</feature>
<feature type="disulfide bond" evidence="1">
    <location>
        <begin position="765"/>
        <end position="831"/>
    </location>
</feature>
<feature type="disulfide bond" evidence="1">
    <location>
        <begin position="794"/>
        <end position="808"/>
    </location>
</feature>
<feature type="disulfide bond" evidence="1">
    <location>
        <begin position="821"/>
        <end position="850"/>
    </location>
</feature>
<protein>
    <recommendedName>
        <fullName>Neurotrypsin</fullName>
        <ecNumber>3.4.21.-</ecNumber>
    </recommendedName>
    <alternativeName>
        <fullName>Serine protease 12</fullName>
    </alternativeName>
</protein>
<sequence length="875" mass="97160">MTLARFVLALMLGALPEVVGFDSVLNDSLHHSHRHSPPPGPHYPYYLPTQQRPPRTRPPPPLPRFPRPPRALPAQRPHALQAGHTPRPHPWGCPAGEPWVSVTDFGAPCLRWAEVPPFLERSPPASWAQLRGQRHNFCRSPDGAGRPWCFYGDARGKVDWGYCDCRHGSVRLRGGKNEFEGTVEVYASGVWGTVCSSHWDDSDASVICHQLQLGGKGIAKQTPFSGLGLIPIYWSNVRCRGDEENILLCEKDIWQGGVCPQKMAAAVTCSFSHGPTFPIIRLAGGSSVHEGRVELYHAGQWGTVCDDQWDDADAEVICRQLGLSGIAKAWHQAYFGEGSGPVMLDEVRCTGNELSIEQCPKSSWGEHNCGHKEDAGVSCTPLTDGVIRLAGGKGSHEGRLEVYYRGQWGTVCDDGWTELNTYVVCRQLGFKYGKQASANHFEESTGPIWLDDVSCSGKETRFLQCSRRQWGRHDCSHREDVSIACYPGGEGHRLSLGFPVRLVDGENKKEGRVEVFINGQWGTICDDGWTDKDAAVICRQLGYKGPARARTMAYFGEGKGPIHVDNVKCTGNERSLADCIKQDIGRHNCRHSEDAGVICDYFGKKASGNSNKESLSSVCGLRLLHRRQKRIIGGKNSLRGGWPWQVSLRLKSSHGDGRLLCGATLLSSCWVLTAAHCFKRYGNSTRSYAVRVGDYHTLVPEEFEEEIGVQQIVIHREYRPDRSDYDIALVRLQGPEEQCARFSSHVLPACLPLWRERPQKTASNCYITGWGDTGRAYSRTLQQAAIPLLPKRFCEERYKRRFTGRMLCAGNLHEHKRVDSCQGDSGGPLMCERPGESWVVYGVTSWGYGCGVKDSPGVYTKVSAFVPWIKSVTKL</sequence>
<dbReference type="EC" id="3.4.21.-"/>
<dbReference type="EMBL" id="AY862976">
    <property type="protein sequence ID" value="AAW57538.1"/>
    <property type="molecule type" value="Genomic_DNA"/>
</dbReference>
<dbReference type="EMBL" id="AY862892">
    <property type="protein sequence ID" value="AAW57538.1"/>
    <property type="status" value="JOINED"/>
    <property type="molecule type" value="Genomic_DNA"/>
</dbReference>
<dbReference type="EMBL" id="AY862899">
    <property type="protein sequence ID" value="AAW57538.1"/>
    <property type="status" value="JOINED"/>
    <property type="molecule type" value="Genomic_DNA"/>
</dbReference>
<dbReference type="EMBL" id="AY862906">
    <property type="protein sequence ID" value="AAW57538.1"/>
    <property type="status" value="JOINED"/>
    <property type="molecule type" value="Genomic_DNA"/>
</dbReference>
<dbReference type="EMBL" id="AY862913">
    <property type="protein sequence ID" value="AAW57538.1"/>
    <property type="status" value="JOINED"/>
    <property type="molecule type" value="Genomic_DNA"/>
</dbReference>
<dbReference type="EMBL" id="AY862920">
    <property type="protein sequence ID" value="AAW57538.1"/>
    <property type="status" value="JOINED"/>
    <property type="molecule type" value="Genomic_DNA"/>
</dbReference>
<dbReference type="EMBL" id="AY862927">
    <property type="protein sequence ID" value="AAW57538.1"/>
    <property type="status" value="JOINED"/>
    <property type="molecule type" value="Genomic_DNA"/>
</dbReference>
<dbReference type="EMBL" id="AY862934">
    <property type="protein sequence ID" value="AAW57538.1"/>
    <property type="status" value="JOINED"/>
    <property type="molecule type" value="Genomic_DNA"/>
</dbReference>
<dbReference type="EMBL" id="AY862941">
    <property type="protein sequence ID" value="AAW57538.1"/>
    <property type="status" value="JOINED"/>
    <property type="molecule type" value="Genomic_DNA"/>
</dbReference>
<dbReference type="EMBL" id="AY862948">
    <property type="protein sequence ID" value="AAW57538.1"/>
    <property type="status" value="JOINED"/>
    <property type="molecule type" value="Genomic_DNA"/>
</dbReference>
<dbReference type="EMBL" id="AY862955">
    <property type="protein sequence ID" value="AAW57538.1"/>
    <property type="status" value="JOINED"/>
    <property type="molecule type" value="Genomic_DNA"/>
</dbReference>
<dbReference type="EMBL" id="AY862962">
    <property type="protein sequence ID" value="AAW57538.1"/>
    <property type="status" value="JOINED"/>
    <property type="molecule type" value="Genomic_DNA"/>
</dbReference>
<dbReference type="EMBL" id="AY862969">
    <property type="protein sequence ID" value="AAW57538.1"/>
    <property type="status" value="JOINED"/>
    <property type="molecule type" value="Genomic_DNA"/>
</dbReference>
<dbReference type="RefSeq" id="NP_001065275.1">
    <property type="nucleotide sequence ID" value="NM_001071807.3"/>
</dbReference>
<dbReference type="SMR" id="Q5G271"/>
<dbReference type="FunCoup" id="Q5G271">
    <property type="interactions" value="52"/>
</dbReference>
<dbReference type="STRING" id="9598.ENSPTRP00000028150"/>
<dbReference type="MEROPS" id="S01.237"/>
<dbReference type="GlyCosmos" id="Q5G271">
    <property type="glycosylation" value="2 sites, No reported glycans"/>
</dbReference>
<dbReference type="PaxDb" id="9598-ENSPTRP00000028150"/>
<dbReference type="Ensembl" id="ENSPTRT00000030484.3">
    <property type="protein sequence ID" value="ENSPTRP00000028150.2"/>
    <property type="gene ID" value="ENSPTRG00000016390.3"/>
</dbReference>
<dbReference type="GeneID" id="471291"/>
<dbReference type="KEGG" id="ptr:471291"/>
<dbReference type="CTD" id="8492"/>
<dbReference type="VGNC" id="VGNC:2965">
    <property type="gene designation" value="PRSS12"/>
</dbReference>
<dbReference type="eggNOG" id="KOG3627">
    <property type="taxonomic scope" value="Eukaryota"/>
</dbReference>
<dbReference type="GeneTree" id="ENSGT00940000158131"/>
<dbReference type="HOGENOM" id="CLU_013656_0_0_1"/>
<dbReference type="InParanoid" id="Q5G271"/>
<dbReference type="OMA" id="GPIHADN"/>
<dbReference type="OrthoDB" id="1029at9604"/>
<dbReference type="TreeFam" id="TF329295"/>
<dbReference type="Proteomes" id="UP000002277">
    <property type="component" value="Chromosome 4"/>
</dbReference>
<dbReference type="Bgee" id="ENSPTRG00000016390">
    <property type="expression patterns" value="Expressed in lung and 20 other cell types or tissues"/>
</dbReference>
<dbReference type="GO" id="GO:0030424">
    <property type="term" value="C:axon"/>
    <property type="evidence" value="ECO:0000250"/>
    <property type="project" value="UniProtKB"/>
</dbReference>
<dbReference type="GO" id="GO:0030425">
    <property type="term" value="C:dendrite"/>
    <property type="evidence" value="ECO:0000318"/>
    <property type="project" value="GO_Central"/>
</dbReference>
<dbReference type="GO" id="GO:0005886">
    <property type="term" value="C:plasma membrane"/>
    <property type="evidence" value="ECO:0000250"/>
    <property type="project" value="UniProtKB"/>
</dbReference>
<dbReference type="GO" id="GO:0043083">
    <property type="term" value="C:synaptic cleft"/>
    <property type="evidence" value="ECO:0000318"/>
    <property type="project" value="GO_Central"/>
</dbReference>
<dbReference type="GO" id="GO:0043195">
    <property type="term" value="C:terminal bouton"/>
    <property type="evidence" value="ECO:0000318"/>
    <property type="project" value="GO_Central"/>
</dbReference>
<dbReference type="GO" id="GO:0004252">
    <property type="term" value="F:serine-type endopeptidase activity"/>
    <property type="evidence" value="ECO:0007669"/>
    <property type="project" value="InterPro"/>
</dbReference>
<dbReference type="GO" id="GO:0006887">
    <property type="term" value="P:exocytosis"/>
    <property type="evidence" value="ECO:0000250"/>
    <property type="project" value="UniProtKB"/>
</dbReference>
<dbReference type="GO" id="GO:0006508">
    <property type="term" value="P:proteolysis"/>
    <property type="evidence" value="ECO:0007669"/>
    <property type="project" value="UniProtKB-KW"/>
</dbReference>
<dbReference type="CDD" id="cd00190">
    <property type="entry name" value="Tryp_SPc"/>
    <property type="match status" value="1"/>
</dbReference>
<dbReference type="FunFam" id="2.40.10.10:FF:000053">
    <property type="entry name" value="Neurotrypsin"/>
    <property type="match status" value="1"/>
</dbReference>
<dbReference type="FunFam" id="2.40.20.10:FF:000010">
    <property type="entry name" value="Neurotrypsin"/>
    <property type="match status" value="1"/>
</dbReference>
<dbReference type="FunFam" id="3.10.250.10:FF:000019">
    <property type="entry name" value="Neurotrypsin"/>
    <property type="match status" value="1"/>
</dbReference>
<dbReference type="FunFam" id="3.10.250.10:FF:000005">
    <property type="entry name" value="Neurotrypsin isoform A"/>
    <property type="match status" value="2"/>
</dbReference>
<dbReference type="FunFam" id="3.10.250.10:FF:000006">
    <property type="entry name" value="neurotrypsin isoform X2"/>
    <property type="match status" value="1"/>
</dbReference>
<dbReference type="Gene3D" id="2.40.20.10">
    <property type="entry name" value="Plasminogen Kringle 4"/>
    <property type="match status" value="1"/>
</dbReference>
<dbReference type="Gene3D" id="3.10.250.10">
    <property type="entry name" value="SRCR-like domain"/>
    <property type="match status" value="4"/>
</dbReference>
<dbReference type="Gene3D" id="2.40.10.10">
    <property type="entry name" value="Trypsin-like serine proteases"/>
    <property type="match status" value="1"/>
</dbReference>
<dbReference type="InterPro" id="IPR000001">
    <property type="entry name" value="Kringle"/>
</dbReference>
<dbReference type="InterPro" id="IPR013806">
    <property type="entry name" value="Kringle-like"/>
</dbReference>
<dbReference type="InterPro" id="IPR018056">
    <property type="entry name" value="Kringle_CS"/>
</dbReference>
<dbReference type="InterPro" id="IPR038178">
    <property type="entry name" value="Kringle_sf"/>
</dbReference>
<dbReference type="InterPro" id="IPR009003">
    <property type="entry name" value="Peptidase_S1_PA"/>
</dbReference>
<dbReference type="InterPro" id="IPR043504">
    <property type="entry name" value="Peptidase_S1_PA_chymotrypsin"/>
</dbReference>
<dbReference type="InterPro" id="IPR001314">
    <property type="entry name" value="Peptidase_S1A"/>
</dbReference>
<dbReference type="InterPro" id="IPR001190">
    <property type="entry name" value="SRCR"/>
</dbReference>
<dbReference type="InterPro" id="IPR036772">
    <property type="entry name" value="SRCR-like_dom_sf"/>
</dbReference>
<dbReference type="InterPro" id="IPR001254">
    <property type="entry name" value="Trypsin_dom"/>
</dbReference>
<dbReference type="InterPro" id="IPR018114">
    <property type="entry name" value="TRYPSIN_HIS"/>
</dbReference>
<dbReference type="InterPro" id="IPR033116">
    <property type="entry name" value="TRYPSIN_SER"/>
</dbReference>
<dbReference type="PANTHER" id="PTHR19331:SF465">
    <property type="entry name" value="EGG PEPTIDE SPERACT RECEPTOR"/>
    <property type="match status" value="1"/>
</dbReference>
<dbReference type="PANTHER" id="PTHR19331">
    <property type="entry name" value="SCAVENGER RECEPTOR DOMAIN-CONTAINING"/>
    <property type="match status" value="1"/>
</dbReference>
<dbReference type="Pfam" id="PF00051">
    <property type="entry name" value="Kringle"/>
    <property type="match status" value="1"/>
</dbReference>
<dbReference type="Pfam" id="PF00530">
    <property type="entry name" value="SRCR"/>
    <property type="match status" value="4"/>
</dbReference>
<dbReference type="Pfam" id="PF00089">
    <property type="entry name" value="Trypsin"/>
    <property type="match status" value="1"/>
</dbReference>
<dbReference type="PRINTS" id="PR00722">
    <property type="entry name" value="CHYMOTRYPSIN"/>
</dbReference>
<dbReference type="PRINTS" id="PR00258">
    <property type="entry name" value="SPERACTRCPTR"/>
</dbReference>
<dbReference type="SMART" id="SM00130">
    <property type="entry name" value="KR"/>
    <property type="match status" value="1"/>
</dbReference>
<dbReference type="SMART" id="SM00202">
    <property type="entry name" value="SR"/>
    <property type="match status" value="4"/>
</dbReference>
<dbReference type="SMART" id="SM00020">
    <property type="entry name" value="Tryp_SPc"/>
    <property type="match status" value="1"/>
</dbReference>
<dbReference type="SUPFAM" id="SSF57440">
    <property type="entry name" value="Kringle-like"/>
    <property type="match status" value="1"/>
</dbReference>
<dbReference type="SUPFAM" id="SSF56487">
    <property type="entry name" value="SRCR-like"/>
    <property type="match status" value="4"/>
</dbReference>
<dbReference type="SUPFAM" id="SSF50494">
    <property type="entry name" value="Trypsin-like serine proteases"/>
    <property type="match status" value="1"/>
</dbReference>
<dbReference type="PROSITE" id="PS00021">
    <property type="entry name" value="KRINGLE_1"/>
    <property type="match status" value="1"/>
</dbReference>
<dbReference type="PROSITE" id="PS50070">
    <property type="entry name" value="KRINGLE_2"/>
    <property type="match status" value="1"/>
</dbReference>
<dbReference type="PROSITE" id="PS00420">
    <property type="entry name" value="SRCR_1"/>
    <property type="match status" value="3"/>
</dbReference>
<dbReference type="PROSITE" id="PS50287">
    <property type="entry name" value="SRCR_2"/>
    <property type="match status" value="4"/>
</dbReference>
<dbReference type="PROSITE" id="PS50240">
    <property type="entry name" value="TRYPSIN_DOM"/>
    <property type="match status" value="1"/>
</dbReference>
<dbReference type="PROSITE" id="PS00134">
    <property type="entry name" value="TRYPSIN_HIS"/>
    <property type="match status" value="1"/>
</dbReference>
<dbReference type="PROSITE" id="PS00135">
    <property type="entry name" value="TRYPSIN_SER"/>
    <property type="match status" value="1"/>
</dbReference>
<reference key="1">
    <citation type="journal article" date="2005" name="Cytogenet. Genome Res.">
        <title>Genetic evidence of a strong functional constraint of neurotrypsin during primate evolution.</title>
        <authorList>
            <person name="Xu H.L."/>
            <person name="Su B."/>
        </authorList>
    </citation>
    <scope>NUCLEOTIDE SEQUENCE [GENOMIC DNA]</scope>
</reference>